<reference key="1">
    <citation type="submission" date="2007-06" db="EMBL/GenBank/DDBJ databases">
        <title>Complete sequence of Methanococcus aeolicus Nankai-3.</title>
        <authorList>
            <consortium name="US DOE Joint Genome Institute"/>
            <person name="Copeland A."/>
            <person name="Lucas S."/>
            <person name="Lapidus A."/>
            <person name="Barry K."/>
            <person name="Glavina del Rio T."/>
            <person name="Dalin E."/>
            <person name="Tice H."/>
            <person name="Pitluck S."/>
            <person name="Chain P."/>
            <person name="Malfatti S."/>
            <person name="Shin M."/>
            <person name="Vergez L."/>
            <person name="Schmutz J."/>
            <person name="Larimer F."/>
            <person name="Land M."/>
            <person name="Hauser L."/>
            <person name="Kyrpides N."/>
            <person name="Lykidis A."/>
            <person name="Sieprawska-Lupa M."/>
            <person name="Whitman W.B."/>
            <person name="Richardson P."/>
        </authorList>
    </citation>
    <scope>NUCLEOTIDE SEQUENCE [LARGE SCALE GENOMIC DNA]</scope>
    <source>
        <strain>ATCC BAA-1280 / DSM 17508 / OCM 812 / Nankai-3</strain>
    </source>
</reference>
<dbReference type="EMBL" id="CP000743">
    <property type="protein sequence ID" value="ABR56982.1"/>
    <property type="molecule type" value="Genomic_DNA"/>
</dbReference>
<dbReference type="RefSeq" id="WP_011974114.1">
    <property type="nucleotide sequence ID" value="NC_009635.1"/>
</dbReference>
<dbReference type="SMR" id="A6UWW0"/>
<dbReference type="STRING" id="419665.Maeo_1406"/>
<dbReference type="GeneID" id="5327297"/>
<dbReference type="KEGG" id="mae:Maeo_1406"/>
<dbReference type="eggNOG" id="arCOG00779">
    <property type="taxonomic scope" value="Archaea"/>
</dbReference>
<dbReference type="HOGENOM" id="CLU_109163_0_0_2"/>
<dbReference type="OrthoDB" id="9418at2157"/>
<dbReference type="Proteomes" id="UP000001106">
    <property type="component" value="Chromosome"/>
</dbReference>
<dbReference type="GO" id="GO:0022625">
    <property type="term" value="C:cytosolic large ribosomal subunit"/>
    <property type="evidence" value="ECO:0007669"/>
    <property type="project" value="TreeGrafter"/>
</dbReference>
<dbReference type="GO" id="GO:0019843">
    <property type="term" value="F:rRNA binding"/>
    <property type="evidence" value="ECO:0007669"/>
    <property type="project" value="UniProtKB-UniRule"/>
</dbReference>
<dbReference type="GO" id="GO:0003735">
    <property type="term" value="F:structural constituent of ribosome"/>
    <property type="evidence" value="ECO:0007669"/>
    <property type="project" value="InterPro"/>
</dbReference>
<dbReference type="GO" id="GO:0006412">
    <property type="term" value="P:translation"/>
    <property type="evidence" value="ECO:0007669"/>
    <property type="project" value="UniProtKB-UniRule"/>
</dbReference>
<dbReference type="Gene3D" id="3.100.10.10">
    <property type="match status" value="1"/>
</dbReference>
<dbReference type="Gene3D" id="4.10.990.10">
    <property type="match status" value="1"/>
</dbReference>
<dbReference type="HAMAP" id="MF_01341">
    <property type="entry name" value="Ribosomal_uL15"/>
    <property type="match status" value="1"/>
</dbReference>
<dbReference type="InterPro" id="IPR027386">
    <property type="entry name" value="Rbsml_uL15_N"/>
</dbReference>
<dbReference type="InterPro" id="IPR030878">
    <property type="entry name" value="Ribosomal_uL15"/>
</dbReference>
<dbReference type="InterPro" id="IPR021131">
    <property type="entry name" value="Ribosomal_uL15/eL18"/>
</dbReference>
<dbReference type="InterPro" id="IPR036227">
    <property type="entry name" value="Ribosomal_uL15/eL18_sf"/>
</dbReference>
<dbReference type="InterPro" id="IPR001196">
    <property type="entry name" value="Ribosomal_uL15_CS"/>
</dbReference>
<dbReference type="PANTHER" id="PTHR11721">
    <property type="entry name" value="60S RIBOSOMAL PROTEIN L27A"/>
    <property type="match status" value="1"/>
</dbReference>
<dbReference type="PANTHER" id="PTHR11721:SF3">
    <property type="entry name" value="LARGE RIBOSOMAL SUBUNIT PROTEIN UL15"/>
    <property type="match status" value="1"/>
</dbReference>
<dbReference type="Pfam" id="PF00828">
    <property type="entry name" value="Ribosomal_L27A"/>
    <property type="match status" value="1"/>
</dbReference>
<dbReference type="SUPFAM" id="SSF52080">
    <property type="entry name" value="Ribosomal proteins L15p and L18e"/>
    <property type="match status" value="1"/>
</dbReference>
<dbReference type="PROSITE" id="PS00475">
    <property type="entry name" value="RIBOSOMAL_L15"/>
    <property type="match status" value="1"/>
</dbReference>
<proteinExistence type="inferred from homology"/>
<comment type="function">
    <text evidence="1">Binds to the 23S rRNA.</text>
</comment>
<comment type="subunit">
    <text evidence="1">Part of the 50S ribosomal subunit.</text>
</comment>
<comment type="similarity">
    <text evidence="1">Belongs to the universal ribosomal protein uL15 family.</text>
</comment>
<keyword id="KW-0687">Ribonucleoprotein</keyword>
<keyword id="KW-0689">Ribosomal protein</keyword>
<keyword id="KW-0694">RNA-binding</keyword>
<keyword id="KW-0699">rRNA-binding</keyword>
<feature type="chain" id="PRO_1000054490" description="Large ribosomal subunit protein uL15">
    <location>
        <begin position="1"/>
        <end position="143"/>
    </location>
</feature>
<accession>A6UWW0</accession>
<organism>
    <name type="scientific">Methanococcus aeolicus (strain ATCC BAA-1280 / DSM 17508 / OCM 812 / Nankai-3)</name>
    <dbReference type="NCBI Taxonomy" id="419665"/>
    <lineage>
        <taxon>Archaea</taxon>
        <taxon>Methanobacteriati</taxon>
        <taxon>Methanobacteriota</taxon>
        <taxon>Methanomada group</taxon>
        <taxon>Methanococci</taxon>
        <taxon>Methanococcales</taxon>
        <taxon>Methanococcaceae</taxon>
        <taxon>Methanococcus</taxon>
    </lineage>
</organism>
<name>RL15_META3</name>
<gene>
    <name evidence="1" type="primary">rpl15</name>
    <name type="ordered locus">Maeo_1406</name>
</gene>
<protein>
    <recommendedName>
        <fullName evidence="1">Large ribosomal subunit protein uL15</fullName>
    </recommendedName>
    <alternativeName>
        <fullName evidence="2">50S ribosomal protein L15</fullName>
    </alternativeName>
</protein>
<sequence length="143" mass="15867">MIRKSKKITKLRGSRTCGYGAAKKHRGAGHKGGKGLAGVTKHRWIHTVKYMPDHIGKYGFKRHSSLIKELKVINLGQLDEIVSKNKESFEIVDGKIVIDITTLDYEKVLGKGKITCPMIIKAVEFSESAKEKIESAGGEFVEL</sequence>
<evidence type="ECO:0000255" key="1">
    <source>
        <dbReference type="HAMAP-Rule" id="MF_01341"/>
    </source>
</evidence>
<evidence type="ECO:0000305" key="2"/>